<sequence length="521" mass="59227">MDGVIESPSNNTIKISPSTSDSSTTTPIITTPPTQSTATVTTKAAATTTTTEASTTPPPPQPTPTPTQSTATVTKEVETTTETIPPIVTKGKIKKSKKSIKKPTIVKRPTTPIDYKQWHTEWPIHVYSHPINGRYLVATKDLDEQTVILRDLPYTWAVDHATCDSVCQHCFLEVPLNQQILPTDFYMCEGCQRVGYCSANCRCIDYSQHRFECQIFKELDTEEYSPFLMSEIKLLVRTLSRKWLEDSITQTAGIDINDETIKKQNTYNQYKNPQSLIPQDNGLRYNDYAELVSNVENYNESLKESLSYWICKYVVKLSAKLGKIEDEFDLLNILLRNRCNAFYIQGRPRDGSSGESRGCGVYVRNSFFNHSCDPNVNYWVVNNTLEVECTLLKNVKEGDELTISYIDTTSPLNKRREKLLEGYLFNCLCTKCVADESLPLDQTGTLEKDDDDNDDEKEKMDEDDDEKDDDINNKNDKKSKYKSDGSTDDEEDEDNNNNKNNNKNKNNNSNNQDHQNNDKSN</sequence>
<protein>
    <recommendedName>
        <fullName>SET and MYND domain-containing protein DDB_G0292140</fullName>
        <ecNumber>2.1.1.-</ecNumber>
    </recommendedName>
</protein>
<accession>Q54DL6</accession>
<feature type="chain" id="PRO_0000389438" description="SET and MYND domain-containing protein DDB_G0292140">
    <location>
        <begin position="1"/>
        <end position="521"/>
    </location>
</feature>
<feature type="domain" description="SET" evidence="3">
    <location>
        <begin position="122"/>
        <end position="406"/>
    </location>
</feature>
<feature type="zinc finger region" description="MYND-type" evidence="2">
    <location>
        <begin position="167"/>
        <end position="213"/>
    </location>
</feature>
<feature type="region of interest" description="Disordered" evidence="4">
    <location>
        <begin position="1"/>
        <end position="101"/>
    </location>
</feature>
<feature type="region of interest" description="Disordered" evidence="4">
    <location>
        <begin position="442"/>
        <end position="521"/>
    </location>
</feature>
<feature type="compositionally biased region" description="Low complexity" evidence="4">
    <location>
        <begin position="12"/>
        <end position="55"/>
    </location>
</feature>
<feature type="compositionally biased region" description="Pro residues" evidence="4">
    <location>
        <begin position="56"/>
        <end position="65"/>
    </location>
</feature>
<feature type="compositionally biased region" description="Low complexity" evidence="4">
    <location>
        <begin position="66"/>
        <end position="90"/>
    </location>
</feature>
<feature type="compositionally biased region" description="Basic residues" evidence="4">
    <location>
        <begin position="91"/>
        <end position="101"/>
    </location>
</feature>
<feature type="compositionally biased region" description="Acidic residues" evidence="4">
    <location>
        <begin position="448"/>
        <end position="469"/>
    </location>
</feature>
<feature type="compositionally biased region" description="Basic and acidic residues" evidence="4">
    <location>
        <begin position="470"/>
        <end position="485"/>
    </location>
</feature>
<feature type="compositionally biased region" description="Acidic residues" evidence="4">
    <location>
        <begin position="486"/>
        <end position="495"/>
    </location>
</feature>
<feature type="compositionally biased region" description="Low complexity" evidence="4">
    <location>
        <begin position="497"/>
        <end position="514"/>
    </location>
</feature>
<feature type="binding site" evidence="2">
    <location>
        <position position="167"/>
    </location>
    <ligand>
        <name>Zn(2+)</name>
        <dbReference type="ChEBI" id="CHEBI:29105"/>
        <label>1</label>
    </ligand>
</feature>
<feature type="binding site" evidence="2">
    <location>
        <position position="170"/>
    </location>
    <ligand>
        <name>Zn(2+)</name>
        <dbReference type="ChEBI" id="CHEBI:29105"/>
        <label>1</label>
    </ligand>
</feature>
<feature type="binding site" evidence="2">
    <location>
        <position position="188"/>
    </location>
    <ligand>
        <name>Zn(2+)</name>
        <dbReference type="ChEBI" id="CHEBI:29105"/>
        <label>2</label>
    </ligand>
</feature>
<feature type="binding site" evidence="2">
    <location>
        <position position="191"/>
    </location>
    <ligand>
        <name>Zn(2+)</name>
        <dbReference type="ChEBI" id="CHEBI:29105"/>
        <label>2</label>
    </ligand>
</feature>
<feature type="binding site" evidence="2">
    <location>
        <position position="197"/>
    </location>
    <ligand>
        <name>Zn(2+)</name>
        <dbReference type="ChEBI" id="CHEBI:29105"/>
        <label>1</label>
    </ligand>
</feature>
<feature type="binding site" evidence="2">
    <location>
        <position position="201"/>
    </location>
    <ligand>
        <name>Zn(2+)</name>
        <dbReference type="ChEBI" id="CHEBI:29105"/>
        <label>1</label>
    </ligand>
</feature>
<feature type="binding site" evidence="2">
    <location>
        <position position="209"/>
    </location>
    <ligand>
        <name>Zn(2+)</name>
        <dbReference type="ChEBI" id="CHEBI:29105"/>
        <label>2</label>
    </ligand>
</feature>
<feature type="binding site" evidence="2">
    <location>
        <position position="213"/>
    </location>
    <ligand>
        <name>Zn(2+)</name>
        <dbReference type="ChEBI" id="CHEBI:29105"/>
        <label>2</label>
    </ligand>
</feature>
<evidence type="ECO:0000250" key="1"/>
<evidence type="ECO:0000255" key="2">
    <source>
        <dbReference type="PROSITE-ProRule" id="PRU00134"/>
    </source>
</evidence>
<evidence type="ECO:0000255" key="3">
    <source>
        <dbReference type="PROSITE-ProRule" id="PRU00190"/>
    </source>
</evidence>
<evidence type="ECO:0000256" key="4">
    <source>
        <dbReference type="SAM" id="MobiDB-lite"/>
    </source>
</evidence>
<dbReference type="EC" id="2.1.1.-"/>
<dbReference type="EMBL" id="AAFI02000187">
    <property type="protein sequence ID" value="EAL61426.1"/>
    <property type="molecule type" value="Genomic_DNA"/>
</dbReference>
<dbReference type="RefSeq" id="XP_629856.1">
    <property type="nucleotide sequence ID" value="XM_629854.1"/>
</dbReference>
<dbReference type="SMR" id="Q54DL6"/>
<dbReference type="FunCoup" id="Q54DL6">
    <property type="interactions" value="197"/>
</dbReference>
<dbReference type="GlyGen" id="Q54DL6">
    <property type="glycosylation" value="3 sites"/>
</dbReference>
<dbReference type="PaxDb" id="44689-DDB0220711"/>
<dbReference type="EnsemblProtists" id="EAL61426">
    <property type="protein sequence ID" value="EAL61426"/>
    <property type="gene ID" value="DDB_G0292140"/>
</dbReference>
<dbReference type="GeneID" id="8628537"/>
<dbReference type="KEGG" id="ddi:DDB_G0292140"/>
<dbReference type="dictyBase" id="DDB_G0292140"/>
<dbReference type="VEuPathDB" id="AmoebaDB:DDB_G0292140"/>
<dbReference type="eggNOG" id="KOG2084">
    <property type="taxonomic scope" value="Eukaryota"/>
</dbReference>
<dbReference type="HOGENOM" id="CLU_523217_0_0_1"/>
<dbReference type="InParanoid" id="Q54DL6"/>
<dbReference type="OMA" id="PYTWAVD"/>
<dbReference type="PhylomeDB" id="Q54DL6"/>
<dbReference type="Reactome" id="R-DDI-3214841">
    <property type="pathway name" value="PKMTs methylate histone lysines"/>
</dbReference>
<dbReference type="PRO" id="PR:Q54DL6"/>
<dbReference type="Proteomes" id="UP000002195">
    <property type="component" value="Chromosome 6"/>
</dbReference>
<dbReference type="GO" id="GO:0005634">
    <property type="term" value="C:nucleus"/>
    <property type="evidence" value="ECO:0000318"/>
    <property type="project" value="GO_Central"/>
</dbReference>
<dbReference type="GO" id="GO:0008168">
    <property type="term" value="F:methyltransferase activity"/>
    <property type="evidence" value="ECO:0007669"/>
    <property type="project" value="UniProtKB-KW"/>
</dbReference>
<dbReference type="GO" id="GO:0008270">
    <property type="term" value="F:zinc ion binding"/>
    <property type="evidence" value="ECO:0007669"/>
    <property type="project" value="UniProtKB-KW"/>
</dbReference>
<dbReference type="GO" id="GO:0032259">
    <property type="term" value="P:methylation"/>
    <property type="evidence" value="ECO:0007669"/>
    <property type="project" value="UniProtKB-KW"/>
</dbReference>
<dbReference type="Gene3D" id="1.10.220.160">
    <property type="match status" value="1"/>
</dbReference>
<dbReference type="Gene3D" id="6.10.140.2220">
    <property type="match status" value="1"/>
</dbReference>
<dbReference type="Gene3D" id="2.170.270.10">
    <property type="entry name" value="SET domain"/>
    <property type="match status" value="1"/>
</dbReference>
<dbReference type="InterPro" id="IPR050869">
    <property type="entry name" value="H3K4_H4K5_MeTrfase"/>
</dbReference>
<dbReference type="InterPro" id="IPR001214">
    <property type="entry name" value="SET_dom"/>
</dbReference>
<dbReference type="InterPro" id="IPR046341">
    <property type="entry name" value="SET_dom_sf"/>
</dbReference>
<dbReference type="InterPro" id="IPR002893">
    <property type="entry name" value="Znf_MYND"/>
</dbReference>
<dbReference type="PANTHER" id="PTHR12197">
    <property type="entry name" value="HISTONE-LYSINE N-METHYLTRANSFERASE SMYD"/>
    <property type="match status" value="1"/>
</dbReference>
<dbReference type="PANTHER" id="PTHR12197:SF211">
    <property type="entry name" value="SET AND MYND DOMAIN-CONTAINING PROTEIN DDB_G0292140-RELATED"/>
    <property type="match status" value="1"/>
</dbReference>
<dbReference type="Pfam" id="PF00856">
    <property type="entry name" value="SET"/>
    <property type="match status" value="1"/>
</dbReference>
<dbReference type="Pfam" id="PF01753">
    <property type="entry name" value="zf-MYND"/>
    <property type="match status" value="1"/>
</dbReference>
<dbReference type="SUPFAM" id="SSF144232">
    <property type="entry name" value="HIT/MYND zinc finger-like"/>
    <property type="match status" value="1"/>
</dbReference>
<dbReference type="SUPFAM" id="SSF82199">
    <property type="entry name" value="SET domain"/>
    <property type="match status" value="1"/>
</dbReference>
<dbReference type="PROSITE" id="PS50280">
    <property type="entry name" value="SET"/>
    <property type="match status" value="1"/>
</dbReference>
<dbReference type="PROSITE" id="PS01360">
    <property type="entry name" value="ZF_MYND_1"/>
    <property type="match status" value="1"/>
</dbReference>
<dbReference type="PROSITE" id="PS50865">
    <property type="entry name" value="ZF_MYND_2"/>
    <property type="match status" value="1"/>
</dbReference>
<organism>
    <name type="scientific">Dictyostelium discoideum</name>
    <name type="common">Social amoeba</name>
    <dbReference type="NCBI Taxonomy" id="44689"/>
    <lineage>
        <taxon>Eukaryota</taxon>
        <taxon>Amoebozoa</taxon>
        <taxon>Evosea</taxon>
        <taxon>Eumycetozoa</taxon>
        <taxon>Dictyostelia</taxon>
        <taxon>Dictyosteliales</taxon>
        <taxon>Dictyosteliaceae</taxon>
        <taxon>Dictyostelium</taxon>
    </lineage>
</organism>
<gene>
    <name type="ORF">DDB_G0292140</name>
</gene>
<reference key="1">
    <citation type="journal article" date="2005" name="Nature">
        <title>The genome of the social amoeba Dictyostelium discoideum.</title>
        <authorList>
            <person name="Eichinger L."/>
            <person name="Pachebat J.A."/>
            <person name="Gloeckner G."/>
            <person name="Rajandream M.A."/>
            <person name="Sucgang R."/>
            <person name="Berriman M."/>
            <person name="Song J."/>
            <person name="Olsen R."/>
            <person name="Szafranski K."/>
            <person name="Xu Q."/>
            <person name="Tunggal B."/>
            <person name="Kummerfeld S."/>
            <person name="Madera M."/>
            <person name="Konfortov B.A."/>
            <person name="Rivero F."/>
            <person name="Bankier A.T."/>
            <person name="Lehmann R."/>
            <person name="Hamlin N."/>
            <person name="Davies R."/>
            <person name="Gaudet P."/>
            <person name="Fey P."/>
            <person name="Pilcher K."/>
            <person name="Chen G."/>
            <person name="Saunders D."/>
            <person name="Sodergren E.J."/>
            <person name="Davis P."/>
            <person name="Kerhornou A."/>
            <person name="Nie X."/>
            <person name="Hall N."/>
            <person name="Anjard C."/>
            <person name="Hemphill L."/>
            <person name="Bason N."/>
            <person name="Farbrother P."/>
            <person name="Desany B."/>
            <person name="Just E."/>
            <person name="Morio T."/>
            <person name="Rost R."/>
            <person name="Churcher C.M."/>
            <person name="Cooper J."/>
            <person name="Haydock S."/>
            <person name="van Driessche N."/>
            <person name="Cronin A."/>
            <person name="Goodhead I."/>
            <person name="Muzny D.M."/>
            <person name="Mourier T."/>
            <person name="Pain A."/>
            <person name="Lu M."/>
            <person name="Harper D."/>
            <person name="Lindsay R."/>
            <person name="Hauser H."/>
            <person name="James K.D."/>
            <person name="Quiles M."/>
            <person name="Madan Babu M."/>
            <person name="Saito T."/>
            <person name="Buchrieser C."/>
            <person name="Wardroper A."/>
            <person name="Felder M."/>
            <person name="Thangavelu M."/>
            <person name="Johnson D."/>
            <person name="Knights A."/>
            <person name="Loulseged H."/>
            <person name="Mungall K.L."/>
            <person name="Oliver K."/>
            <person name="Price C."/>
            <person name="Quail M.A."/>
            <person name="Urushihara H."/>
            <person name="Hernandez J."/>
            <person name="Rabbinowitsch E."/>
            <person name="Steffen D."/>
            <person name="Sanders M."/>
            <person name="Ma J."/>
            <person name="Kohara Y."/>
            <person name="Sharp S."/>
            <person name="Simmonds M.N."/>
            <person name="Spiegler S."/>
            <person name="Tivey A."/>
            <person name="Sugano S."/>
            <person name="White B."/>
            <person name="Walker D."/>
            <person name="Woodward J.R."/>
            <person name="Winckler T."/>
            <person name="Tanaka Y."/>
            <person name="Shaulsky G."/>
            <person name="Schleicher M."/>
            <person name="Weinstock G.M."/>
            <person name="Rosenthal A."/>
            <person name="Cox E.C."/>
            <person name="Chisholm R.L."/>
            <person name="Gibbs R.A."/>
            <person name="Loomis W.F."/>
            <person name="Platzer M."/>
            <person name="Kay R.R."/>
            <person name="Williams J.G."/>
            <person name="Dear P.H."/>
            <person name="Noegel A.A."/>
            <person name="Barrell B.G."/>
            <person name="Kuspa A."/>
        </authorList>
    </citation>
    <scope>NUCLEOTIDE SEQUENCE [LARGE SCALE GENOMIC DNA]</scope>
    <source>
        <strain>AX4</strain>
    </source>
</reference>
<name>Y2140_DICDI</name>
<comment type="function">
    <text evidence="1">Probable methyltransferase.</text>
</comment>
<comment type="similarity">
    <text evidence="3">Belongs to the class V-like SAM-binding methyltransferase superfamily.</text>
</comment>
<keyword id="KW-0479">Metal-binding</keyword>
<keyword id="KW-0489">Methyltransferase</keyword>
<keyword id="KW-1185">Reference proteome</keyword>
<keyword id="KW-0949">S-adenosyl-L-methionine</keyword>
<keyword id="KW-0808">Transferase</keyword>
<keyword id="KW-0862">Zinc</keyword>
<keyword id="KW-0863">Zinc-finger</keyword>
<proteinExistence type="inferred from homology"/>